<comment type="function">
    <text evidence="1 3">Carrier protein that bears the covalently bound substrates for arginine and lysine biosynthesis; bound L-glutamate is sequentially converted to L-ornithine, while bound alpha-aminoadipate (AAA) is sequentially converted to L-lysine.</text>
</comment>
<comment type="pathway">
    <text>Amino-acid biosynthesis; L-lysine biosynthesis via AAA pathway.</text>
</comment>
<comment type="pathway">
    <text>Amino-acid biosynthesis; L-arginine biosynthesis.</text>
</comment>
<comment type="subunit">
    <text evidence="1">Monomer.</text>
</comment>
<comment type="PTM">
    <text evidence="1">Formation of an isopeptide bond between the gamma-carboxyl group of the C-terminal glutamate and the amino group of alpha-aminoadipate (AAA) is catalyzed by LysX. The bound AAA is then converted to L-lysine in a series of reactions catalyzed by LysZ, LysY and LysJ. Release of the product L-lysine is catalyzed by LysK. Formation of an isopeptide bond between the gamma-carboxyl group of the C-terminal glutamate and the amino group of L-glutamate is catalyzed by ArgX. The bound substrate is then sequentially converted to ornithine which is eventually converted to L-arginine (By similarity).</text>
</comment>
<protein>
    <recommendedName>
        <fullName>Alpha-aminoadipate/glutamate carrier protein LysW</fullName>
    </recommendedName>
    <alternativeName>
        <fullName>AAA carrier protein LysW</fullName>
    </alternativeName>
</protein>
<evidence type="ECO:0000250" key="1"/>
<evidence type="ECO:0000250" key="2">
    <source>
        <dbReference type="UniProtKB" id="Q976J8"/>
    </source>
</evidence>
<evidence type="ECO:0000269" key="3">
    <source>
    </source>
</evidence>
<reference key="1">
    <citation type="journal article" date="2001" name="Proc. Natl. Acad. Sci. U.S.A.">
        <title>The complete genome of the crenarchaeon Sulfolobus solfataricus P2.</title>
        <authorList>
            <person name="She Q."/>
            <person name="Singh R.K."/>
            <person name="Confalonieri F."/>
            <person name="Zivanovic Y."/>
            <person name="Allard G."/>
            <person name="Awayez M.J."/>
            <person name="Chan-Weiher C.C.-Y."/>
            <person name="Clausen I.G."/>
            <person name="Curtis B.A."/>
            <person name="De Moors A."/>
            <person name="Erauso G."/>
            <person name="Fletcher C."/>
            <person name="Gordon P.M.K."/>
            <person name="Heikamp-de Jong I."/>
            <person name="Jeffries A.C."/>
            <person name="Kozera C.J."/>
            <person name="Medina N."/>
            <person name="Peng X."/>
            <person name="Thi-Ngoc H.P."/>
            <person name="Redder P."/>
            <person name="Schenk M.E."/>
            <person name="Theriault C."/>
            <person name="Tolstrup N."/>
            <person name="Charlebois R.L."/>
            <person name="Doolittle W.F."/>
            <person name="Duguet M."/>
            <person name="Gaasterland T."/>
            <person name="Garrett R.A."/>
            <person name="Ragan M.A."/>
            <person name="Sensen C.W."/>
            <person name="Van der Oost J."/>
        </authorList>
    </citation>
    <scope>NUCLEOTIDE SEQUENCE [LARGE SCALE GENOMIC DNA]</scope>
    <source>
        <strain>ATCC 35092 / DSM 1617 / JCM 11322 / P2</strain>
    </source>
</reference>
<reference key="2">
    <citation type="journal article" date="2002" name="J. Biol. Chem.">
        <title>The Sulfolobus solfataricus Lrp-like protein LysM regulates lysine biosynthesis in response to lysine availability.</title>
        <authorList>
            <person name="Brinkman A.B."/>
            <person name="Bell S.D."/>
            <person name="Lebbink R.J."/>
            <person name="de Vos W.M."/>
            <person name="van der Oost J."/>
        </authorList>
    </citation>
    <scope>FUNCTION IN LYSINE BIOSYNTHESIS</scope>
    <scope>INDUCTION</scope>
    <source>
        <strain>ATCC 35092 / DSM 1617 / JCM 11322 / P2</strain>
    </source>
</reference>
<dbReference type="EMBL" id="AE006641">
    <property type="protein sequence ID" value="AAK40504.1"/>
    <property type="molecule type" value="Genomic_DNA"/>
</dbReference>
<dbReference type="EMBL" id="BK000545">
    <property type="protein sequence ID" value="DAA00052.1"/>
    <property type="molecule type" value="Genomic_DNA"/>
</dbReference>
<dbReference type="PIR" id="A90156">
    <property type="entry name" value="A90156"/>
</dbReference>
<dbReference type="RefSeq" id="WP_009990383.1">
    <property type="nucleotide sequence ID" value="NC_002754.1"/>
</dbReference>
<dbReference type="SMR" id="Q980W8"/>
<dbReference type="STRING" id="273057.SSO5317"/>
<dbReference type="PaxDb" id="273057-SSO5317"/>
<dbReference type="EnsemblBacteria" id="AAK40504">
    <property type="protein sequence ID" value="AAK40504"/>
    <property type="gene ID" value="SSO5317"/>
</dbReference>
<dbReference type="KEGG" id="sso:SSO5317"/>
<dbReference type="PATRIC" id="fig|273057.12.peg.155"/>
<dbReference type="eggNOG" id="arCOG01588">
    <property type="taxonomic scope" value="Archaea"/>
</dbReference>
<dbReference type="HOGENOM" id="CLU_195720_1_0_2"/>
<dbReference type="InParanoid" id="Q980W8"/>
<dbReference type="PhylomeDB" id="Q980W8"/>
<dbReference type="UniPathway" id="UPA00033"/>
<dbReference type="UniPathway" id="UPA00068"/>
<dbReference type="Proteomes" id="UP000001974">
    <property type="component" value="Chromosome"/>
</dbReference>
<dbReference type="GO" id="GO:0008270">
    <property type="term" value="F:zinc ion binding"/>
    <property type="evidence" value="ECO:0007669"/>
    <property type="project" value="UniProtKB-KW"/>
</dbReference>
<dbReference type="GO" id="GO:0006526">
    <property type="term" value="P:L-arginine biosynthetic process"/>
    <property type="evidence" value="ECO:0007669"/>
    <property type="project" value="UniProtKB-UniPathway"/>
</dbReference>
<dbReference type="GO" id="GO:0019878">
    <property type="term" value="P:lysine biosynthetic process via aminoadipic acid"/>
    <property type="evidence" value="ECO:0007669"/>
    <property type="project" value="UniProtKB-UniPathway"/>
</dbReference>
<dbReference type="CDD" id="cd13946">
    <property type="entry name" value="LysW"/>
    <property type="match status" value="1"/>
</dbReference>
<dbReference type="Gene3D" id="2.20.28.160">
    <property type="match status" value="1"/>
</dbReference>
<dbReference type="InterPro" id="IPR005906">
    <property type="entry name" value="LysW"/>
</dbReference>
<dbReference type="NCBIfam" id="NF041070">
    <property type="entry name" value="carrier_LysW_Arch"/>
    <property type="match status" value="1"/>
</dbReference>
<dbReference type="PANTHER" id="PTHR40393:SF2">
    <property type="entry name" value="ALPHA-AMINOADIPATE_GLUTAMATE CARRIER PROTEIN LYSW"/>
    <property type="match status" value="1"/>
</dbReference>
<dbReference type="PANTHER" id="PTHR40393">
    <property type="entry name" value="LYSINE BIOSYNTHESIS PROTEIN-RELATED-RELATED"/>
    <property type="match status" value="1"/>
</dbReference>
<dbReference type="Pfam" id="PF21344">
    <property type="entry name" value="Zn_ribbon_LysW"/>
    <property type="match status" value="1"/>
</dbReference>
<keyword id="KW-0028">Amino-acid biosynthesis</keyword>
<keyword id="KW-0055">Arginine biosynthesis</keyword>
<keyword id="KW-1017">Isopeptide bond</keyword>
<keyword id="KW-0457">Lysine biosynthesis</keyword>
<keyword id="KW-0479">Metal-binding</keyword>
<keyword id="KW-1185">Reference proteome</keyword>
<keyword id="KW-0862">Zinc</keyword>
<keyword id="KW-0863">Zinc-finger</keyword>
<accession>Q980W8</accession>
<proteinExistence type="evidence at protein level"/>
<sequence>MVNLKCPICGGEITVEDDALPGELVEHECGAQLEVVKQNGKLSLRLAEQIGEDWGE</sequence>
<name>LYSW_SACS2</name>
<feature type="chain" id="PRO_0000084537" description="Alpha-aminoadipate/glutamate carrier protein LysW">
    <location>
        <begin position="1"/>
        <end position="56"/>
    </location>
</feature>
<feature type="zinc finger region" description="TFIIB-type">
    <location>
        <begin position="1"/>
        <end position="34"/>
    </location>
</feature>
<feature type="short sequence motif" description="EDWGE">
    <location>
        <position position="50"/>
    </location>
</feature>
<feature type="binding site" evidence="1">
    <location>
        <position position="6"/>
    </location>
    <ligand>
        <name>Zn(2+)</name>
        <dbReference type="ChEBI" id="CHEBI:29105"/>
    </ligand>
</feature>
<feature type="binding site" evidence="1">
    <location>
        <position position="9"/>
    </location>
    <ligand>
        <name>Zn(2+)</name>
        <dbReference type="ChEBI" id="CHEBI:29105"/>
    </ligand>
</feature>
<feature type="binding site" evidence="1">
    <location>
        <position position="27"/>
    </location>
    <ligand>
        <name>Zn(2+)</name>
        <dbReference type="ChEBI" id="CHEBI:29105"/>
    </ligand>
</feature>
<feature type="binding site" evidence="1">
    <location>
        <position position="29"/>
    </location>
    <ligand>
        <name>Zn(2+)</name>
        <dbReference type="ChEBI" id="CHEBI:29105"/>
    </ligand>
</feature>
<feature type="modified residue" description="5-glutamyl 2-aminoadipic acid; alternate" evidence="2">
    <location>
        <position position="56"/>
    </location>
</feature>
<feature type="modified residue" description="5-glutamyl glutamate; alternate" evidence="2">
    <location>
        <position position="56"/>
    </location>
</feature>
<feature type="modified residue" description="5-glutamyl N2-lysine; alternate" evidence="2">
    <location>
        <position position="56"/>
    </location>
</feature>
<feature type="modified residue" description="5-glutamyl N2-ornithine; alternate" evidence="2">
    <location>
        <position position="56"/>
    </location>
</feature>
<organism>
    <name type="scientific">Saccharolobus solfataricus (strain ATCC 35092 / DSM 1617 / JCM 11322 / P2)</name>
    <name type="common">Sulfolobus solfataricus</name>
    <dbReference type="NCBI Taxonomy" id="273057"/>
    <lineage>
        <taxon>Archaea</taxon>
        <taxon>Thermoproteota</taxon>
        <taxon>Thermoprotei</taxon>
        <taxon>Sulfolobales</taxon>
        <taxon>Sulfolobaceae</taxon>
        <taxon>Saccharolobus</taxon>
    </lineage>
</organism>
<gene>
    <name type="primary">lysW</name>
    <name type="ordered locus">SSO5317</name>
</gene>